<evidence type="ECO:0000255" key="1">
    <source>
        <dbReference type="HAMAP-Rule" id="MF_00456"/>
    </source>
</evidence>
<feature type="chain" id="PRO_0000230055" description="Glutamate 5-kinase 1">
    <location>
        <begin position="1"/>
        <end position="368"/>
    </location>
</feature>
<feature type="domain" description="PUA" evidence="1">
    <location>
        <begin position="274"/>
        <end position="348"/>
    </location>
</feature>
<feature type="binding site" evidence="1">
    <location>
        <position position="12"/>
    </location>
    <ligand>
        <name>ATP</name>
        <dbReference type="ChEBI" id="CHEBI:30616"/>
    </ligand>
</feature>
<feature type="binding site" evidence="1">
    <location>
        <position position="52"/>
    </location>
    <ligand>
        <name>substrate</name>
    </ligand>
</feature>
<feature type="binding site" evidence="1">
    <location>
        <position position="135"/>
    </location>
    <ligand>
        <name>substrate</name>
    </ligand>
</feature>
<feature type="binding site" evidence="1">
    <location>
        <position position="147"/>
    </location>
    <ligand>
        <name>substrate</name>
    </ligand>
</feature>
<feature type="binding site" evidence="1">
    <location>
        <begin position="167"/>
        <end position="168"/>
    </location>
    <ligand>
        <name>ATP</name>
        <dbReference type="ChEBI" id="CHEBI:30616"/>
    </ligand>
</feature>
<feature type="binding site" evidence="1">
    <location>
        <begin position="209"/>
        <end position="215"/>
    </location>
    <ligand>
        <name>ATP</name>
        <dbReference type="ChEBI" id="CHEBI:30616"/>
    </ligand>
</feature>
<sequence>MNKLNWRRIVLKVGSALIAPDQDGCRSRYILTIAQFIVRCRARGIEVILVSSGSVAAGAHLFPSDTARSVVMKKAMAAAGQTEMIAMWDRFFDFPSAQLLLTHGDLRDHERYQSIRETVFTLLEHGVLPIINENDAVTTDDLKVGDNDNLSAMVAAAADADALLIFSDVDGLYDKNPNLHDDAILLPEIKSIDDSIYAMAGCATSAVGTGGMKTKIEAAEKATSHGISTYIINGFKEETFTRLLAGENPGTIFLPYEKPMQDSVHWMTHTANEQGEVVVDGSFDKSLEGETGCIRGDEIMAVHGEFAIGDTILVRSEDGTRLAKATANYSSCLLSFIADNEQSEFSEKMQDSIGPVISEKHIALLEKS</sequence>
<protein>
    <recommendedName>
        <fullName evidence="1">Glutamate 5-kinase 1</fullName>
        <ecNumber evidence="1">2.7.2.11</ecNumber>
    </recommendedName>
    <alternativeName>
        <fullName evidence="1">Gamma-glutamyl kinase 1</fullName>
        <shortName evidence="1">GK 1</shortName>
    </alternativeName>
</protein>
<proteinExistence type="inferred from homology"/>
<gene>
    <name evidence="1" type="primary">proB1</name>
    <name type="ordered locus">PSHAa0279</name>
</gene>
<accession>Q3IEY8</accession>
<organism>
    <name type="scientific">Pseudoalteromonas translucida (strain TAC 125)</name>
    <dbReference type="NCBI Taxonomy" id="326442"/>
    <lineage>
        <taxon>Bacteria</taxon>
        <taxon>Pseudomonadati</taxon>
        <taxon>Pseudomonadota</taxon>
        <taxon>Gammaproteobacteria</taxon>
        <taxon>Alteromonadales</taxon>
        <taxon>Pseudoalteromonadaceae</taxon>
        <taxon>Pseudoalteromonas</taxon>
    </lineage>
</organism>
<name>PROB1_PSET1</name>
<reference key="1">
    <citation type="journal article" date="2005" name="Genome Res.">
        <title>Coping with cold: the genome of the versatile marine Antarctica bacterium Pseudoalteromonas haloplanktis TAC125.</title>
        <authorList>
            <person name="Medigue C."/>
            <person name="Krin E."/>
            <person name="Pascal G."/>
            <person name="Barbe V."/>
            <person name="Bernsel A."/>
            <person name="Bertin P.N."/>
            <person name="Cheung F."/>
            <person name="Cruveiller S."/>
            <person name="D'Amico S."/>
            <person name="Duilio A."/>
            <person name="Fang G."/>
            <person name="Feller G."/>
            <person name="Ho C."/>
            <person name="Mangenot S."/>
            <person name="Marino G."/>
            <person name="Nilsson J."/>
            <person name="Parrilli E."/>
            <person name="Rocha E.P.C."/>
            <person name="Rouy Z."/>
            <person name="Sekowska A."/>
            <person name="Tutino M.L."/>
            <person name="Vallenet D."/>
            <person name="von Heijne G."/>
            <person name="Danchin A."/>
        </authorList>
    </citation>
    <scope>NUCLEOTIDE SEQUENCE [LARGE SCALE GENOMIC DNA]</scope>
    <source>
        <strain>TAC 125</strain>
    </source>
</reference>
<keyword id="KW-0028">Amino-acid biosynthesis</keyword>
<keyword id="KW-0067">ATP-binding</keyword>
<keyword id="KW-0963">Cytoplasm</keyword>
<keyword id="KW-0418">Kinase</keyword>
<keyword id="KW-0547">Nucleotide-binding</keyword>
<keyword id="KW-0641">Proline biosynthesis</keyword>
<keyword id="KW-1185">Reference proteome</keyword>
<keyword id="KW-0808">Transferase</keyword>
<comment type="function">
    <text evidence="1">Catalyzes the transfer of a phosphate group to glutamate to form L-glutamate 5-phosphate.</text>
</comment>
<comment type="catalytic activity">
    <reaction evidence="1">
        <text>L-glutamate + ATP = L-glutamyl 5-phosphate + ADP</text>
        <dbReference type="Rhea" id="RHEA:14877"/>
        <dbReference type="ChEBI" id="CHEBI:29985"/>
        <dbReference type="ChEBI" id="CHEBI:30616"/>
        <dbReference type="ChEBI" id="CHEBI:58274"/>
        <dbReference type="ChEBI" id="CHEBI:456216"/>
        <dbReference type="EC" id="2.7.2.11"/>
    </reaction>
</comment>
<comment type="pathway">
    <text evidence="1">Amino-acid biosynthesis; L-proline biosynthesis; L-glutamate 5-semialdehyde from L-glutamate: step 1/2.</text>
</comment>
<comment type="subcellular location">
    <subcellularLocation>
        <location evidence="1">Cytoplasm</location>
    </subcellularLocation>
</comment>
<comment type="similarity">
    <text evidence="1">Belongs to the glutamate 5-kinase family.</text>
</comment>
<dbReference type="EC" id="2.7.2.11" evidence="1"/>
<dbReference type="EMBL" id="CR954246">
    <property type="protein sequence ID" value="CAI85378.1"/>
    <property type="molecule type" value="Genomic_DNA"/>
</dbReference>
<dbReference type="SMR" id="Q3IEY8"/>
<dbReference type="STRING" id="326442.PSHAa0279"/>
<dbReference type="KEGG" id="pha:PSHAa0279"/>
<dbReference type="eggNOG" id="COG0263">
    <property type="taxonomic scope" value="Bacteria"/>
</dbReference>
<dbReference type="HOGENOM" id="CLU_025400_2_1_6"/>
<dbReference type="BioCyc" id="PHAL326442:PSHA_RS01380-MONOMER"/>
<dbReference type="UniPathway" id="UPA00098">
    <property type="reaction ID" value="UER00359"/>
</dbReference>
<dbReference type="Proteomes" id="UP000006843">
    <property type="component" value="Chromosome I"/>
</dbReference>
<dbReference type="GO" id="GO:0005829">
    <property type="term" value="C:cytosol"/>
    <property type="evidence" value="ECO:0007669"/>
    <property type="project" value="TreeGrafter"/>
</dbReference>
<dbReference type="GO" id="GO:0005524">
    <property type="term" value="F:ATP binding"/>
    <property type="evidence" value="ECO:0007669"/>
    <property type="project" value="UniProtKB-KW"/>
</dbReference>
<dbReference type="GO" id="GO:0004349">
    <property type="term" value="F:glutamate 5-kinase activity"/>
    <property type="evidence" value="ECO:0007669"/>
    <property type="project" value="UniProtKB-UniRule"/>
</dbReference>
<dbReference type="GO" id="GO:0003723">
    <property type="term" value="F:RNA binding"/>
    <property type="evidence" value="ECO:0007669"/>
    <property type="project" value="InterPro"/>
</dbReference>
<dbReference type="GO" id="GO:0055129">
    <property type="term" value="P:L-proline biosynthetic process"/>
    <property type="evidence" value="ECO:0007669"/>
    <property type="project" value="UniProtKB-UniRule"/>
</dbReference>
<dbReference type="CDD" id="cd04242">
    <property type="entry name" value="AAK_G5K_ProB"/>
    <property type="match status" value="1"/>
</dbReference>
<dbReference type="CDD" id="cd21157">
    <property type="entry name" value="PUA_G5K"/>
    <property type="match status" value="1"/>
</dbReference>
<dbReference type="FunFam" id="3.40.1160.10:FF:000018">
    <property type="entry name" value="Glutamate 5-kinase"/>
    <property type="match status" value="1"/>
</dbReference>
<dbReference type="Gene3D" id="3.40.1160.10">
    <property type="entry name" value="Acetylglutamate kinase-like"/>
    <property type="match status" value="1"/>
</dbReference>
<dbReference type="Gene3D" id="2.30.130.10">
    <property type="entry name" value="PUA domain"/>
    <property type="match status" value="1"/>
</dbReference>
<dbReference type="HAMAP" id="MF_00456">
    <property type="entry name" value="ProB"/>
    <property type="match status" value="1"/>
</dbReference>
<dbReference type="InterPro" id="IPR036393">
    <property type="entry name" value="AceGlu_kinase-like_sf"/>
</dbReference>
<dbReference type="InterPro" id="IPR001048">
    <property type="entry name" value="Asp/Glu/Uridylate_kinase"/>
</dbReference>
<dbReference type="InterPro" id="IPR041739">
    <property type="entry name" value="G5K_ProB"/>
</dbReference>
<dbReference type="InterPro" id="IPR001057">
    <property type="entry name" value="Glu/AcGlu_kinase"/>
</dbReference>
<dbReference type="InterPro" id="IPR011529">
    <property type="entry name" value="Glu_5kinase"/>
</dbReference>
<dbReference type="InterPro" id="IPR005715">
    <property type="entry name" value="Glu_5kinase/COase_Synthase"/>
</dbReference>
<dbReference type="InterPro" id="IPR019797">
    <property type="entry name" value="Glutamate_5-kinase_CS"/>
</dbReference>
<dbReference type="InterPro" id="IPR015947">
    <property type="entry name" value="PUA-like_sf"/>
</dbReference>
<dbReference type="InterPro" id="IPR036974">
    <property type="entry name" value="PUA_sf"/>
</dbReference>
<dbReference type="NCBIfam" id="TIGR01027">
    <property type="entry name" value="proB"/>
    <property type="match status" value="1"/>
</dbReference>
<dbReference type="PANTHER" id="PTHR43654">
    <property type="entry name" value="GLUTAMATE 5-KINASE"/>
    <property type="match status" value="1"/>
</dbReference>
<dbReference type="PANTHER" id="PTHR43654:SF1">
    <property type="entry name" value="ISOPENTENYL PHOSPHATE KINASE"/>
    <property type="match status" value="1"/>
</dbReference>
<dbReference type="Pfam" id="PF00696">
    <property type="entry name" value="AA_kinase"/>
    <property type="match status" value="1"/>
</dbReference>
<dbReference type="PIRSF" id="PIRSF000729">
    <property type="entry name" value="GK"/>
    <property type="match status" value="1"/>
</dbReference>
<dbReference type="PRINTS" id="PR00474">
    <property type="entry name" value="GLU5KINASE"/>
</dbReference>
<dbReference type="SUPFAM" id="SSF53633">
    <property type="entry name" value="Carbamate kinase-like"/>
    <property type="match status" value="1"/>
</dbReference>
<dbReference type="SUPFAM" id="SSF88697">
    <property type="entry name" value="PUA domain-like"/>
    <property type="match status" value="1"/>
</dbReference>
<dbReference type="PROSITE" id="PS00902">
    <property type="entry name" value="GLUTAMATE_5_KINASE"/>
    <property type="match status" value="1"/>
</dbReference>